<reference key="1">
    <citation type="journal article" date="2005" name="Nature">
        <title>Sequencing of Aspergillus nidulans and comparative analysis with A. fumigatus and A. oryzae.</title>
        <authorList>
            <person name="Galagan J.E."/>
            <person name="Calvo S.E."/>
            <person name="Cuomo C."/>
            <person name="Ma L.-J."/>
            <person name="Wortman J.R."/>
            <person name="Batzoglou S."/>
            <person name="Lee S.-I."/>
            <person name="Bastuerkmen M."/>
            <person name="Spevak C.C."/>
            <person name="Clutterbuck J."/>
            <person name="Kapitonov V."/>
            <person name="Jurka J."/>
            <person name="Scazzocchio C."/>
            <person name="Farman M.L."/>
            <person name="Butler J."/>
            <person name="Purcell S."/>
            <person name="Harris S."/>
            <person name="Braus G.H."/>
            <person name="Draht O."/>
            <person name="Busch S."/>
            <person name="D'Enfert C."/>
            <person name="Bouchier C."/>
            <person name="Goldman G.H."/>
            <person name="Bell-Pedersen D."/>
            <person name="Griffiths-Jones S."/>
            <person name="Doonan J.H."/>
            <person name="Yu J."/>
            <person name="Vienken K."/>
            <person name="Pain A."/>
            <person name="Freitag M."/>
            <person name="Selker E.U."/>
            <person name="Archer D.B."/>
            <person name="Penalva M.A."/>
            <person name="Oakley B.R."/>
            <person name="Momany M."/>
            <person name="Tanaka T."/>
            <person name="Kumagai T."/>
            <person name="Asai K."/>
            <person name="Machida M."/>
            <person name="Nierman W.C."/>
            <person name="Denning D.W."/>
            <person name="Caddick M.X."/>
            <person name="Hynes M."/>
            <person name="Paoletti M."/>
            <person name="Fischer R."/>
            <person name="Miller B.L."/>
            <person name="Dyer P.S."/>
            <person name="Sachs M.S."/>
            <person name="Osmani S.A."/>
            <person name="Birren B.W."/>
        </authorList>
    </citation>
    <scope>NUCLEOTIDE SEQUENCE [LARGE SCALE GENOMIC DNA]</scope>
    <source>
        <strain>FGSC A4 / ATCC 38163 / CBS 112.46 / NRRL 194 / M139</strain>
    </source>
</reference>
<reference key="2">
    <citation type="journal article" date="2009" name="Fungal Genet. Biol.">
        <title>The 2008 update of the Aspergillus nidulans genome annotation: a community effort.</title>
        <authorList>
            <person name="Wortman J.R."/>
            <person name="Gilsenan J.M."/>
            <person name="Joardar V."/>
            <person name="Deegan J."/>
            <person name="Clutterbuck J."/>
            <person name="Andersen M.R."/>
            <person name="Archer D."/>
            <person name="Bencina M."/>
            <person name="Braus G."/>
            <person name="Coutinho P."/>
            <person name="von Dohren H."/>
            <person name="Doonan J."/>
            <person name="Driessen A.J."/>
            <person name="Durek P."/>
            <person name="Espeso E."/>
            <person name="Fekete E."/>
            <person name="Flipphi M."/>
            <person name="Estrada C.G."/>
            <person name="Geysens S."/>
            <person name="Goldman G."/>
            <person name="de Groot P.W."/>
            <person name="Hansen K."/>
            <person name="Harris S.D."/>
            <person name="Heinekamp T."/>
            <person name="Helmstaedt K."/>
            <person name="Henrissat B."/>
            <person name="Hofmann G."/>
            <person name="Homan T."/>
            <person name="Horio T."/>
            <person name="Horiuchi H."/>
            <person name="James S."/>
            <person name="Jones M."/>
            <person name="Karaffa L."/>
            <person name="Karanyi Z."/>
            <person name="Kato M."/>
            <person name="Keller N."/>
            <person name="Kelly D.E."/>
            <person name="Kiel J.A."/>
            <person name="Kim J.M."/>
            <person name="van der Klei I.J."/>
            <person name="Klis F.M."/>
            <person name="Kovalchuk A."/>
            <person name="Krasevec N."/>
            <person name="Kubicek C.P."/>
            <person name="Liu B."/>
            <person name="Maccabe A."/>
            <person name="Meyer V."/>
            <person name="Mirabito P."/>
            <person name="Miskei M."/>
            <person name="Mos M."/>
            <person name="Mullins J."/>
            <person name="Nelson D.R."/>
            <person name="Nielsen J."/>
            <person name="Oakley B.R."/>
            <person name="Osmani S.A."/>
            <person name="Pakula T."/>
            <person name="Paszewski A."/>
            <person name="Paulsen I."/>
            <person name="Pilsyk S."/>
            <person name="Pocsi I."/>
            <person name="Punt P.J."/>
            <person name="Ram A.F."/>
            <person name="Ren Q."/>
            <person name="Robellet X."/>
            <person name="Robson G."/>
            <person name="Seiboth B."/>
            <person name="van Solingen P."/>
            <person name="Specht T."/>
            <person name="Sun J."/>
            <person name="Taheri-Talesh N."/>
            <person name="Takeshita N."/>
            <person name="Ussery D."/>
            <person name="vanKuyk P.A."/>
            <person name="Visser H."/>
            <person name="van de Vondervoort P.J."/>
            <person name="de Vries R.P."/>
            <person name="Walton J."/>
            <person name="Xiang X."/>
            <person name="Xiong Y."/>
            <person name="Zeng A.P."/>
            <person name="Brandt B.W."/>
            <person name="Cornell M.J."/>
            <person name="van den Hondel C.A."/>
            <person name="Visser J."/>
            <person name="Oliver S.G."/>
            <person name="Turner G."/>
        </authorList>
    </citation>
    <scope>GENOME REANNOTATION</scope>
    <source>
        <strain>FGSC A4 / ATCC 38163 / CBS 112.46 / NRRL 194 / M139</strain>
    </source>
</reference>
<accession>Q5AW04</accession>
<accession>C8VBL2</accession>
<organism>
    <name type="scientific">Emericella nidulans (strain FGSC A4 / ATCC 38163 / CBS 112.46 / NRRL 194 / M139)</name>
    <name type="common">Aspergillus nidulans</name>
    <dbReference type="NCBI Taxonomy" id="227321"/>
    <lineage>
        <taxon>Eukaryota</taxon>
        <taxon>Fungi</taxon>
        <taxon>Dikarya</taxon>
        <taxon>Ascomycota</taxon>
        <taxon>Pezizomycotina</taxon>
        <taxon>Eurotiomycetes</taxon>
        <taxon>Eurotiomycetidae</taxon>
        <taxon>Eurotiales</taxon>
        <taxon>Aspergillaceae</taxon>
        <taxon>Aspergillus</taxon>
        <taxon>Aspergillus subgen. Nidulantes</taxon>
    </lineage>
</organism>
<protein>
    <recommendedName>
        <fullName>Protein bfr2</fullName>
    </recommendedName>
</protein>
<comment type="subcellular location">
    <subcellularLocation>
        <location evidence="1">Nucleus</location>
        <location evidence="1">Nucleolus</location>
    </subcellularLocation>
</comment>
<comment type="similarity">
    <text evidence="3">Belongs to the AATF family.</text>
</comment>
<proteinExistence type="inferred from homology"/>
<evidence type="ECO:0000250" key="1"/>
<evidence type="ECO:0000256" key="2">
    <source>
        <dbReference type="SAM" id="MobiDB-lite"/>
    </source>
</evidence>
<evidence type="ECO:0000305" key="3"/>
<keyword id="KW-0539">Nucleus</keyword>
<keyword id="KW-1185">Reference proteome</keyword>
<gene>
    <name type="primary">bfr2</name>
    <name type="ORF">AN7526</name>
</gene>
<name>BFR2_EMENI</name>
<feature type="chain" id="PRO_0000056627" description="Protein bfr2">
    <location>
        <begin position="1"/>
        <end position="576"/>
    </location>
</feature>
<feature type="region of interest" description="Disordered" evidence="2">
    <location>
        <begin position="1"/>
        <end position="227"/>
    </location>
</feature>
<feature type="region of interest" description="Disordered" evidence="2">
    <location>
        <begin position="328"/>
        <end position="351"/>
    </location>
</feature>
<feature type="region of interest" description="Disordered" evidence="2">
    <location>
        <begin position="414"/>
        <end position="433"/>
    </location>
</feature>
<feature type="region of interest" description="Disordered" evidence="2">
    <location>
        <begin position="548"/>
        <end position="576"/>
    </location>
</feature>
<feature type="compositionally biased region" description="Basic and acidic residues" evidence="2">
    <location>
        <begin position="39"/>
        <end position="49"/>
    </location>
</feature>
<feature type="compositionally biased region" description="Acidic residues" evidence="2">
    <location>
        <begin position="95"/>
        <end position="123"/>
    </location>
</feature>
<feature type="compositionally biased region" description="Acidic residues" evidence="2">
    <location>
        <begin position="142"/>
        <end position="206"/>
    </location>
</feature>
<feature type="compositionally biased region" description="Acidic residues" evidence="2">
    <location>
        <begin position="552"/>
        <end position="568"/>
    </location>
</feature>
<sequence>MAPKSLAEQIADLEDLTPRDYDPEDIERGGNSSDEDVEVKDANAGREHYQAVGKAKLRNEGPVSLGKQYAGSRVSRDALEAESDEDPFRARSSDEESEDESDLEDEDEDGDEDEDEDISEGSEDERPSKSKAHSLKGREDADVGMDSDDSEEDEDGEGFDDGFSDEDEDISGEDDSEDDEDAKEEEEEEEEEEEEEEDDESEDEEEKTAKPKRRVQFANAKVADTSDDRAQLRQLLATDQKTIAATISQAAKADATKGRAVKHQRATFDALLNARIKLQKGLTAANQLATRTQPSEDADTDAFKSAETAALTLWSTLEDLRLTLVDAQTQDDSKKRKRPSPATTSTSTSSLWKRMAELESDSLAHRRAILDKWSLKVRGSATATTLANSKTKLLGTSGAQQTITAVLDAHVASETTDRSSKRLKSTQGSTSDPNEVKVYDDTIFYQSLLRDLVSQRMSSTDAITNGLDTLHILPSRNGAGAIHPITGMRKDKVKREVDTRASKGRKMRFDVHEKLQNFMAPEERGTWTKRAREEFFASLLGRSASGILREDDVSDDEDGEKSDEDVEEGGLRLFRS</sequence>
<dbReference type="EMBL" id="AACD01000129">
    <property type="protein sequence ID" value="EAA62106.1"/>
    <property type="molecule type" value="Genomic_DNA"/>
</dbReference>
<dbReference type="EMBL" id="BN001304">
    <property type="protein sequence ID" value="CBF79565.1"/>
    <property type="molecule type" value="Genomic_DNA"/>
</dbReference>
<dbReference type="RefSeq" id="XP_680795.1">
    <property type="nucleotide sequence ID" value="XM_675703.1"/>
</dbReference>
<dbReference type="FunCoup" id="Q5AW04">
    <property type="interactions" value="870"/>
</dbReference>
<dbReference type="STRING" id="227321.Q5AW04"/>
<dbReference type="EnsemblFungi" id="CBF79565">
    <property type="protein sequence ID" value="CBF79565"/>
    <property type="gene ID" value="ANIA_07526"/>
</dbReference>
<dbReference type="KEGG" id="ani:ANIA_07526"/>
<dbReference type="VEuPathDB" id="FungiDB:AN7526"/>
<dbReference type="eggNOG" id="KOG2773">
    <property type="taxonomic scope" value="Eukaryota"/>
</dbReference>
<dbReference type="HOGENOM" id="CLU_018299_2_2_1"/>
<dbReference type="InParanoid" id="Q5AW04"/>
<dbReference type="OMA" id="INFMAPN"/>
<dbReference type="OrthoDB" id="5783963at2759"/>
<dbReference type="Proteomes" id="UP000000560">
    <property type="component" value="Chromosome IV"/>
</dbReference>
<dbReference type="GO" id="GO:0005730">
    <property type="term" value="C:nucleolus"/>
    <property type="evidence" value="ECO:0000318"/>
    <property type="project" value="GO_Central"/>
</dbReference>
<dbReference type="GO" id="GO:0000462">
    <property type="term" value="P:maturation of SSU-rRNA from tricistronic rRNA transcript (SSU-rRNA, 5.8S rRNA, LSU-rRNA)"/>
    <property type="evidence" value="ECO:0000318"/>
    <property type="project" value="GO_Central"/>
</dbReference>
<dbReference type="InterPro" id="IPR025160">
    <property type="entry name" value="AATF"/>
</dbReference>
<dbReference type="InterPro" id="IPR039223">
    <property type="entry name" value="AATF/Bfr2"/>
</dbReference>
<dbReference type="InterPro" id="IPR012617">
    <property type="entry name" value="AATF_C"/>
</dbReference>
<dbReference type="PANTHER" id="PTHR15565">
    <property type="entry name" value="AATF PROTEIN APOPTOSIS ANTAGONIZING TRANSCRIPTION FACTOR"/>
    <property type="match status" value="1"/>
</dbReference>
<dbReference type="PANTHER" id="PTHR15565:SF0">
    <property type="entry name" value="PROTEIN AATF"/>
    <property type="match status" value="1"/>
</dbReference>
<dbReference type="Pfam" id="PF13339">
    <property type="entry name" value="AATF-Che1"/>
    <property type="match status" value="1"/>
</dbReference>
<dbReference type="Pfam" id="PF08164">
    <property type="entry name" value="TRAUB"/>
    <property type="match status" value="1"/>
</dbReference>